<reference key="1">
    <citation type="journal article" date="2003" name="Proc. Natl. Acad. Sci. U.S.A.">
        <title>The complete genome sequence of Mycobacterium bovis.</title>
        <authorList>
            <person name="Garnier T."/>
            <person name="Eiglmeier K."/>
            <person name="Camus J.-C."/>
            <person name="Medina N."/>
            <person name="Mansoor H."/>
            <person name="Pryor M."/>
            <person name="Duthoy S."/>
            <person name="Grondin S."/>
            <person name="Lacroix C."/>
            <person name="Monsempe C."/>
            <person name="Simon S."/>
            <person name="Harris B."/>
            <person name="Atkin R."/>
            <person name="Doggett J."/>
            <person name="Mayes R."/>
            <person name="Keating L."/>
            <person name="Wheeler P.R."/>
            <person name="Parkhill J."/>
            <person name="Barrell B.G."/>
            <person name="Cole S.T."/>
            <person name="Gordon S.V."/>
            <person name="Hewinson R.G."/>
        </authorList>
    </citation>
    <scope>NUCLEOTIDE SEQUENCE [LARGE SCALE GENOMIC DNA]</scope>
    <source>
        <strain>ATCC BAA-935 / AF2122/97</strain>
    </source>
</reference>
<reference key="2">
    <citation type="journal article" date="2017" name="Genome Announc.">
        <title>Updated reference genome sequence and annotation of Mycobacterium bovis AF2122/97.</title>
        <authorList>
            <person name="Malone K.M."/>
            <person name="Farrell D."/>
            <person name="Stuber T.P."/>
            <person name="Schubert O.T."/>
            <person name="Aebersold R."/>
            <person name="Robbe-Austerman S."/>
            <person name="Gordon S.V."/>
        </authorList>
    </citation>
    <scope>NUCLEOTIDE SEQUENCE [LARGE SCALE GENOMIC DNA]</scope>
    <scope>GENOME REANNOTATION</scope>
    <source>
        <strain>ATCC BAA-935 / AF2122/97</strain>
    </source>
</reference>
<protein>
    <recommendedName>
        <fullName evidence="1">Bifunctional protein FolD</fullName>
    </recommendedName>
    <domain>
        <recommendedName>
            <fullName evidence="1">Methylenetetrahydrofolate dehydrogenase</fullName>
            <ecNumber evidence="1">1.5.1.5</ecNumber>
        </recommendedName>
    </domain>
    <domain>
        <recommendedName>
            <fullName evidence="1">Methenyltetrahydrofolate cyclohydrolase</fullName>
            <ecNumber evidence="1">3.5.4.9</ecNumber>
        </recommendedName>
    </domain>
</protein>
<feature type="chain" id="PRO_0000268399" description="Bifunctional protein FolD">
    <location>
        <begin position="1"/>
        <end position="281"/>
    </location>
</feature>
<feature type="binding site" evidence="1">
    <location>
        <begin position="165"/>
        <end position="167"/>
    </location>
    <ligand>
        <name>NADP(+)</name>
        <dbReference type="ChEBI" id="CHEBI:58349"/>
    </ligand>
</feature>
<feature type="binding site" evidence="1">
    <location>
        <position position="192"/>
    </location>
    <ligand>
        <name>NADP(+)</name>
        <dbReference type="ChEBI" id="CHEBI:58349"/>
    </ligand>
</feature>
<feature type="binding site" evidence="1">
    <location>
        <position position="233"/>
    </location>
    <ligand>
        <name>NADP(+)</name>
        <dbReference type="ChEBI" id="CHEBI:58349"/>
    </ligand>
</feature>
<comment type="function">
    <text evidence="1">Catalyzes the oxidation of 5,10-methylenetetrahydrofolate to 5,10-methenyltetrahydrofolate and then the hydrolysis of 5,10-methenyltetrahydrofolate to 10-formyltetrahydrofolate.</text>
</comment>
<comment type="catalytic activity">
    <reaction evidence="1">
        <text>(6R)-5,10-methylene-5,6,7,8-tetrahydrofolate + NADP(+) = (6R)-5,10-methenyltetrahydrofolate + NADPH</text>
        <dbReference type="Rhea" id="RHEA:22812"/>
        <dbReference type="ChEBI" id="CHEBI:15636"/>
        <dbReference type="ChEBI" id="CHEBI:57455"/>
        <dbReference type="ChEBI" id="CHEBI:57783"/>
        <dbReference type="ChEBI" id="CHEBI:58349"/>
        <dbReference type="EC" id="1.5.1.5"/>
    </reaction>
</comment>
<comment type="catalytic activity">
    <reaction evidence="1">
        <text>(6R)-5,10-methenyltetrahydrofolate + H2O = (6R)-10-formyltetrahydrofolate + H(+)</text>
        <dbReference type="Rhea" id="RHEA:23700"/>
        <dbReference type="ChEBI" id="CHEBI:15377"/>
        <dbReference type="ChEBI" id="CHEBI:15378"/>
        <dbReference type="ChEBI" id="CHEBI:57455"/>
        <dbReference type="ChEBI" id="CHEBI:195366"/>
        <dbReference type="EC" id="3.5.4.9"/>
    </reaction>
</comment>
<comment type="pathway">
    <text evidence="1">One-carbon metabolism; tetrahydrofolate interconversion.</text>
</comment>
<comment type="subunit">
    <text evidence="1">Homodimer.</text>
</comment>
<comment type="similarity">
    <text evidence="1">Belongs to the tetrahydrofolate dehydrogenase/cyclohydrolase family.</text>
</comment>
<proteinExistence type="inferred from homology"/>
<gene>
    <name evidence="1" type="primary">folD</name>
    <name type="ordered locus">BQ2027_MB3391C</name>
</gene>
<evidence type="ECO:0000255" key="1">
    <source>
        <dbReference type="HAMAP-Rule" id="MF_01576"/>
    </source>
</evidence>
<organism>
    <name type="scientific">Mycobacterium bovis (strain ATCC BAA-935 / AF2122/97)</name>
    <dbReference type="NCBI Taxonomy" id="233413"/>
    <lineage>
        <taxon>Bacteria</taxon>
        <taxon>Bacillati</taxon>
        <taxon>Actinomycetota</taxon>
        <taxon>Actinomycetes</taxon>
        <taxon>Mycobacteriales</taxon>
        <taxon>Mycobacteriaceae</taxon>
        <taxon>Mycobacterium</taxon>
        <taxon>Mycobacterium tuberculosis complex</taxon>
    </lineage>
</organism>
<name>FOLD_MYCBO</name>
<keyword id="KW-0028">Amino-acid biosynthesis</keyword>
<keyword id="KW-0368">Histidine biosynthesis</keyword>
<keyword id="KW-0378">Hydrolase</keyword>
<keyword id="KW-0486">Methionine biosynthesis</keyword>
<keyword id="KW-0511">Multifunctional enzyme</keyword>
<keyword id="KW-0521">NADP</keyword>
<keyword id="KW-0554">One-carbon metabolism</keyword>
<keyword id="KW-0560">Oxidoreductase</keyword>
<keyword id="KW-0658">Purine biosynthesis</keyword>
<keyword id="KW-1185">Reference proteome</keyword>
<accession>Q7TWN0</accession>
<accession>A0A1R3Y402</accession>
<accession>X2BNF5</accession>
<sequence>MGAIMLDGKATRDEIFGDLKPRVAALDAAGRTPGLGTILVGDDPGSQAYVRGKHADCAKVGITSIRRDLPADISTATLNETIDELNANPDCTGYIVQLPLPKHLDENAALERVDPAKDADGLHPTNLGRLVLGTPAPLPCTPRGIVHLLRRYDISIAGAHVVVIGRGVTVGRPLGLLLTRRSENATVTLCHTGTRDLPALTRQADIVVAAVGVAHLLTADMVRPGAAVIDVGVSRTDDGLVGDVHPDVWELAGHVSPNPGGVGPLTRAFLLTNVVELAERR</sequence>
<dbReference type="EC" id="1.5.1.5" evidence="1"/>
<dbReference type="EC" id="3.5.4.9" evidence="1"/>
<dbReference type="EMBL" id="LT708304">
    <property type="protein sequence ID" value="SIU02020.1"/>
    <property type="molecule type" value="Genomic_DNA"/>
</dbReference>
<dbReference type="RefSeq" id="NP_857032.1">
    <property type="nucleotide sequence ID" value="NC_002945.3"/>
</dbReference>
<dbReference type="RefSeq" id="WP_010950877.1">
    <property type="nucleotide sequence ID" value="NC_002945.4"/>
</dbReference>
<dbReference type="SMR" id="Q7TWN0"/>
<dbReference type="KEGG" id="mbo:BQ2027_MB3391C"/>
<dbReference type="PATRIC" id="fig|233413.5.peg.3726"/>
<dbReference type="UniPathway" id="UPA00193"/>
<dbReference type="Proteomes" id="UP000001419">
    <property type="component" value="Chromosome"/>
</dbReference>
<dbReference type="GO" id="GO:0005829">
    <property type="term" value="C:cytosol"/>
    <property type="evidence" value="ECO:0007669"/>
    <property type="project" value="TreeGrafter"/>
</dbReference>
<dbReference type="GO" id="GO:0004477">
    <property type="term" value="F:methenyltetrahydrofolate cyclohydrolase activity"/>
    <property type="evidence" value="ECO:0007669"/>
    <property type="project" value="UniProtKB-UniRule"/>
</dbReference>
<dbReference type="GO" id="GO:0004488">
    <property type="term" value="F:methylenetetrahydrofolate dehydrogenase (NADP+) activity"/>
    <property type="evidence" value="ECO:0007669"/>
    <property type="project" value="UniProtKB-UniRule"/>
</dbReference>
<dbReference type="GO" id="GO:0000105">
    <property type="term" value="P:L-histidine biosynthetic process"/>
    <property type="evidence" value="ECO:0007669"/>
    <property type="project" value="UniProtKB-KW"/>
</dbReference>
<dbReference type="GO" id="GO:0009086">
    <property type="term" value="P:methionine biosynthetic process"/>
    <property type="evidence" value="ECO:0007669"/>
    <property type="project" value="UniProtKB-KW"/>
</dbReference>
<dbReference type="GO" id="GO:0006164">
    <property type="term" value="P:purine nucleotide biosynthetic process"/>
    <property type="evidence" value="ECO:0007669"/>
    <property type="project" value="UniProtKB-KW"/>
</dbReference>
<dbReference type="GO" id="GO:0035999">
    <property type="term" value="P:tetrahydrofolate interconversion"/>
    <property type="evidence" value="ECO:0007669"/>
    <property type="project" value="UniProtKB-UniRule"/>
</dbReference>
<dbReference type="CDD" id="cd01080">
    <property type="entry name" value="NAD_bind_m-THF_DH_Cyclohyd"/>
    <property type="match status" value="1"/>
</dbReference>
<dbReference type="FunFam" id="3.40.50.720:FF:000094">
    <property type="entry name" value="Bifunctional protein FolD"/>
    <property type="match status" value="1"/>
</dbReference>
<dbReference type="FunFam" id="3.40.50.10860:FF:000005">
    <property type="entry name" value="C-1-tetrahydrofolate synthase, cytoplasmic, putative"/>
    <property type="match status" value="1"/>
</dbReference>
<dbReference type="Gene3D" id="3.40.50.10860">
    <property type="entry name" value="Leucine Dehydrogenase, chain A, domain 1"/>
    <property type="match status" value="1"/>
</dbReference>
<dbReference type="Gene3D" id="3.40.50.720">
    <property type="entry name" value="NAD(P)-binding Rossmann-like Domain"/>
    <property type="match status" value="1"/>
</dbReference>
<dbReference type="HAMAP" id="MF_01576">
    <property type="entry name" value="THF_DHG_CYH"/>
    <property type="match status" value="1"/>
</dbReference>
<dbReference type="InterPro" id="IPR046346">
    <property type="entry name" value="Aminoacid_DH-like_N_sf"/>
</dbReference>
<dbReference type="InterPro" id="IPR036291">
    <property type="entry name" value="NAD(P)-bd_dom_sf"/>
</dbReference>
<dbReference type="InterPro" id="IPR000672">
    <property type="entry name" value="THF_DH/CycHdrlase"/>
</dbReference>
<dbReference type="InterPro" id="IPR020630">
    <property type="entry name" value="THF_DH/CycHdrlase_cat_dom"/>
</dbReference>
<dbReference type="InterPro" id="IPR020631">
    <property type="entry name" value="THF_DH/CycHdrlase_NAD-bd_dom"/>
</dbReference>
<dbReference type="NCBIfam" id="NF010789">
    <property type="entry name" value="PRK14193.1"/>
    <property type="match status" value="1"/>
</dbReference>
<dbReference type="PANTHER" id="PTHR48099:SF5">
    <property type="entry name" value="C-1-TETRAHYDROFOLATE SYNTHASE, CYTOPLASMIC"/>
    <property type="match status" value="1"/>
</dbReference>
<dbReference type="PANTHER" id="PTHR48099">
    <property type="entry name" value="C-1-TETRAHYDROFOLATE SYNTHASE, CYTOPLASMIC-RELATED"/>
    <property type="match status" value="1"/>
</dbReference>
<dbReference type="Pfam" id="PF00763">
    <property type="entry name" value="THF_DHG_CYH"/>
    <property type="match status" value="1"/>
</dbReference>
<dbReference type="Pfam" id="PF02882">
    <property type="entry name" value="THF_DHG_CYH_C"/>
    <property type="match status" value="1"/>
</dbReference>
<dbReference type="PRINTS" id="PR00085">
    <property type="entry name" value="THFDHDRGNASE"/>
</dbReference>
<dbReference type="SUPFAM" id="SSF53223">
    <property type="entry name" value="Aminoacid dehydrogenase-like, N-terminal domain"/>
    <property type="match status" value="1"/>
</dbReference>
<dbReference type="SUPFAM" id="SSF51735">
    <property type="entry name" value="NAD(P)-binding Rossmann-fold domains"/>
    <property type="match status" value="1"/>
</dbReference>